<evidence type="ECO:0000255" key="1">
    <source>
        <dbReference type="HAMAP-Rule" id="MF_01334"/>
    </source>
</evidence>
<evidence type="ECO:0000256" key="2">
    <source>
        <dbReference type="SAM" id="MobiDB-lite"/>
    </source>
</evidence>
<evidence type="ECO:0000305" key="3"/>
<organism>
    <name type="scientific">Legionella pneumophila (strain Paris)</name>
    <dbReference type="NCBI Taxonomy" id="297246"/>
    <lineage>
        <taxon>Bacteria</taxon>
        <taxon>Pseudomonadati</taxon>
        <taxon>Pseudomonadota</taxon>
        <taxon>Gammaproteobacteria</taxon>
        <taxon>Legionellales</taxon>
        <taxon>Legionellaceae</taxon>
        <taxon>Legionella</taxon>
    </lineage>
</organism>
<sequence>MSTIQLEAQSRTDMGKGASRRLRRLENKVPAVIYGGSKKPMAIHFSHNKVIKALETESIYSSVFDITVDGKVEHVILKALQRHPYKPIVLHMDLQRVSSKDILVKLVPVHFINEEQSPGIKAGGIVQHTMTQVEIRCQAKDLPEFIEVDMSKVGMDDVVHLSDLKLPKGVQLTVDVADGSHDAPVVSIHAAKVSSTELEETPEVPASAVPTTDQGESAE</sequence>
<feature type="chain" id="PRO_0000181557" description="Large ribosomal subunit protein bL25">
    <location>
        <begin position="1"/>
        <end position="219"/>
    </location>
</feature>
<feature type="region of interest" description="Disordered" evidence="2">
    <location>
        <begin position="194"/>
        <end position="219"/>
    </location>
</feature>
<feature type="compositionally biased region" description="Polar residues" evidence="2">
    <location>
        <begin position="209"/>
        <end position="219"/>
    </location>
</feature>
<accession>Q5X1N8</accession>
<proteinExistence type="inferred from homology"/>
<keyword id="KW-0687">Ribonucleoprotein</keyword>
<keyword id="KW-0689">Ribosomal protein</keyword>
<keyword id="KW-0694">RNA-binding</keyword>
<keyword id="KW-0699">rRNA-binding</keyword>
<comment type="function">
    <text evidence="1">This is one of the proteins that binds to the 5S RNA in the ribosome where it forms part of the central protuberance.</text>
</comment>
<comment type="subunit">
    <text evidence="1">Part of the 50S ribosomal subunit; part of the 5S rRNA/L5/L18/L25 subcomplex. Contacts the 5S rRNA. Binds to the 5S rRNA independently of L5 and L18.</text>
</comment>
<comment type="similarity">
    <text evidence="1">Belongs to the bacterial ribosomal protein bL25 family. CTC subfamily.</text>
</comment>
<name>RL25_LEGPA</name>
<reference key="1">
    <citation type="journal article" date="2004" name="Nat. Genet.">
        <title>Evidence in the Legionella pneumophila genome for exploitation of host cell functions and high genome plasticity.</title>
        <authorList>
            <person name="Cazalet C."/>
            <person name="Rusniok C."/>
            <person name="Brueggemann H."/>
            <person name="Zidane N."/>
            <person name="Magnier A."/>
            <person name="Ma L."/>
            <person name="Tichit M."/>
            <person name="Jarraud S."/>
            <person name="Bouchier C."/>
            <person name="Vandenesch F."/>
            <person name="Kunst F."/>
            <person name="Etienne J."/>
            <person name="Glaser P."/>
            <person name="Buchrieser C."/>
        </authorList>
    </citation>
    <scope>NUCLEOTIDE SEQUENCE [LARGE SCALE GENOMIC DNA]</scope>
    <source>
        <strain>Paris</strain>
    </source>
</reference>
<protein>
    <recommendedName>
        <fullName evidence="1">Large ribosomal subunit protein bL25</fullName>
    </recommendedName>
    <alternativeName>
        <fullName evidence="3">50S ribosomal protein L25</fullName>
    </alternativeName>
    <alternativeName>
        <fullName evidence="1">General stress protein CTC</fullName>
    </alternativeName>
</protein>
<dbReference type="EMBL" id="CR628336">
    <property type="protein sequence ID" value="CAH13858.1"/>
    <property type="molecule type" value="Genomic_DNA"/>
</dbReference>
<dbReference type="RefSeq" id="WP_010948352.1">
    <property type="nucleotide sequence ID" value="NC_006368.1"/>
</dbReference>
<dbReference type="SMR" id="Q5X1N8"/>
<dbReference type="KEGG" id="lpp:lpp2705"/>
<dbReference type="LegioList" id="lpp2705"/>
<dbReference type="HOGENOM" id="CLU_075939_0_1_6"/>
<dbReference type="GO" id="GO:0022625">
    <property type="term" value="C:cytosolic large ribosomal subunit"/>
    <property type="evidence" value="ECO:0007669"/>
    <property type="project" value="TreeGrafter"/>
</dbReference>
<dbReference type="GO" id="GO:0008097">
    <property type="term" value="F:5S rRNA binding"/>
    <property type="evidence" value="ECO:0007669"/>
    <property type="project" value="InterPro"/>
</dbReference>
<dbReference type="GO" id="GO:0003735">
    <property type="term" value="F:structural constituent of ribosome"/>
    <property type="evidence" value="ECO:0007669"/>
    <property type="project" value="InterPro"/>
</dbReference>
<dbReference type="GO" id="GO:0006412">
    <property type="term" value="P:translation"/>
    <property type="evidence" value="ECO:0007669"/>
    <property type="project" value="UniProtKB-UniRule"/>
</dbReference>
<dbReference type="CDD" id="cd00495">
    <property type="entry name" value="Ribosomal_L25_TL5_CTC"/>
    <property type="match status" value="1"/>
</dbReference>
<dbReference type="FunFam" id="2.40.240.10:FF:000002">
    <property type="entry name" value="50S ribosomal protein L25"/>
    <property type="match status" value="1"/>
</dbReference>
<dbReference type="Gene3D" id="2.170.120.20">
    <property type="entry name" value="Ribosomal protein L25, beta domain"/>
    <property type="match status" value="1"/>
</dbReference>
<dbReference type="Gene3D" id="2.40.240.10">
    <property type="entry name" value="Ribosomal Protein L25, Chain P"/>
    <property type="match status" value="1"/>
</dbReference>
<dbReference type="HAMAP" id="MF_01334">
    <property type="entry name" value="Ribosomal_bL25_CTC"/>
    <property type="match status" value="1"/>
</dbReference>
<dbReference type="InterPro" id="IPR020056">
    <property type="entry name" value="Rbsml_bL25/Gln-tRNA_synth_N"/>
</dbReference>
<dbReference type="InterPro" id="IPR011035">
    <property type="entry name" value="Ribosomal_bL25/Gln-tRNA_synth"/>
</dbReference>
<dbReference type="InterPro" id="IPR020057">
    <property type="entry name" value="Ribosomal_bL25_b-dom"/>
</dbReference>
<dbReference type="InterPro" id="IPR037121">
    <property type="entry name" value="Ribosomal_bL25_C"/>
</dbReference>
<dbReference type="InterPro" id="IPR001021">
    <property type="entry name" value="Ribosomal_bL25_long"/>
</dbReference>
<dbReference type="InterPro" id="IPR029751">
    <property type="entry name" value="Ribosomal_L25_dom"/>
</dbReference>
<dbReference type="InterPro" id="IPR020930">
    <property type="entry name" value="Ribosomal_uL5_bac-type"/>
</dbReference>
<dbReference type="NCBIfam" id="TIGR00731">
    <property type="entry name" value="bL25_bact_ctc"/>
    <property type="match status" value="1"/>
</dbReference>
<dbReference type="NCBIfam" id="NF004128">
    <property type="entry name" value="PRK05618.1-2"/>
    <property type="match status" value="1"/>
</dbReference>
<dbReference type="NCBIfam" id="NF004130">
    <property type="entry name" value="PRK05618.1-5"/>
    <property type="match status" value="1"/>
</dbReference>
<dbReference type="NCBIfam" id="NF004612">
    <property type="entry name" value="PRK05943.1"/>
    <property type="match status" value="1"/>
</dbReference>
<dbReference type="PANTHER" id="PTHR33284">
    <property type="entry name" value="RIBOSOMAL PROTEIN L25/GLN-TRNA SYNTHETASE, ANTI-CODON-BINDING DOMAIN-CONTAINING PROTEIN"/>
    <property type="match status" value="1"/>
</dbReference>
<dbReference type="PANTHER" id="PTHR33284:SF1">
    <property type="entry name" value="RIBOSOMAL PROTEIN L25_GLN-TRNA SYNTHETASE, ANTI-CODON-BINDING DOMAIN-CONTAINING PROTEIN"/>
    <property type="match status" value="1"/>
</dbReference>
<dbReference type="Pfam" id="PF01386">
    <property type="entry name" value="Ribosomal_L25p"/>
    <property type="match status" value="1"/>
</dbReference>
<dbReference type="Pfam" id="PF14693">
    <property type="entry name" value="Ribosomal_TL5_C"/>
    <property type="match status" value="1"/>
</dbReference>
<dbReference type="SUPFAM" id="SSF50715">
    <property type="entry name" value="Ribosomal protein L25-like"/>
    <property type="match status" value="1"/>
</dbReference>
<gene>
    <name evidence="1" type="primary">rplY</name>
    <name evidence="1" type="synonym">ctc</name>
    <name type="ordered locus">lpp2705</name>
</gene>